<proteinExistence type="inferred from homology"/>
<accession>Q600M2</accession>
<organism>
    <name type="scientific">Mesomycoplasma hyopneumoniae (strain 232)</name>
    <name type="common">Mycoplasma hyopneumoniae</name>
    <dbReference type="NCBI Taxonomy" id="295358"/>
    <lineage>
        <taxon>Bacteria</taxon>
        <taxon>Bacillati</taxon>
        <taxon>Mycoplasmatota</taxon>
        <taxon>Mycoplasmoidales</taxon>
        <taxon>Metamycoplasmataceae</taxon>
        <taxon>Mesomycoplasma</taxon>
    </lineage>
</organism>
<protein>
    <recommendedName>
        <fullName evidence="1">tRNA-specific 2-thiouridylase MnmA</fullName>
        <ecNumber evidence="1">2.8.1.13</ecNumber>
    </recommendedName>
</protein>
<feature type="chain" id="PRO_0000349707" description="tRNA-specific 2-thiouridylase MnmA">
    <location>
        <begin position="1"/>
        <end position="372"/>
    </location>
</feature>
<feature type="region of interest" description="Interaction with target base in tRNA" evidence="1">
    <location>
        <begin position="104"/>
        <end position="106"/>
    </location>
</feature>
<feature type="region of interest" description="Interaction with tRNA" evidence="1">
    <location>
        <begin position="152"/>
        <end position="154"/>
    </location>
</feature>
<feature type="region of interest" description="Interaction with tRNA" evidence="1">
    <location>
        <begin position="310"/>
        <end position="311"/>
    </location>
</feature>
<feature type="active site" description="Nucleophile" evidence="1">
    <location>
        <position position="109"/>
    </location>
</feature>
<feature type="active site" description="Cysteine persulfide intermediate" evidence="1">
    <location>
        <position position="202"/>
    </location>
</feature>
<feature type="binding site" evidence="1">
    <location>
        <begin position="7"/>
        <end position="14"/>
    </location>
    <ligand>
        <name>ATP</name>
        <dbReference type="ChEBI" id="CHEBI:30616"/>
    </ligand>
</feature>
<feature type="binding site" evidence="1">
    <location>
        <position position="33"/>
    </location>
    <ligand>
        <name>ATP</name>
        <dbReference type="ChEBI" id="CHEBI:30616"/>
    </ligand>
</feature>
<feature type="binding site" evidence="1">
    <location>
        <position position="134"/>
    </location>
    <ligand>
        <name>ATP</name>
        <dbReference type="ChEBI" id="CHEBI:30616"/>
    </ligand>
</feature>
<feature type="site" description="Interaction with tRNA" evidence="1">
    <location>
        <position position="135"/>
    </location>
</feature>
<feature type="site" description="Interaction with tRNA" evidence="1">
    <location>
        <position position="342"/>
    </location>
</feature>
<feature type="disulfide bond" description="Alternate" evidence="1">
    <location>
        <begin position="109"/>
        <end position="202"/>
    </location>
</feature>
<keyword id="KW-0067">ATP-binding</keyword>
<keyword id="KW-0963">Cytoplasm</keyword>
<keyword id="KW-1015">Disulfide bond</keyword>
<keyword id="KW-0547">Nucleotide-binding</keyword>
<keyword id="KW-0694">RNA-binding</keyword>
<keyword id="KW-0808">Transferase</keyword>
<keyword id="KW-0819">tRNA processing</keyword>
<keyword id="KW-0820">tRNA-binding</keyword>
<reference key="1">
    <citation type="journal article" date="2004" name="J. Bacteriol.">
        <title>The genome sequence of Mycoplasma hyopneumoniae strain 232, the agent of swine mycoplasmosis.</title>
        <authorList>
            <person name="Minion F.C."/>
            <person name="Lefkowitz E.J."/>
            <person name="Madsen M.L."/>
            <person name="Cleary B.J."/>
            <person name="Swartzell S.M."/>
            <person name="Mahairas G.G."/>
        </authorList>
    </citation>
    <scope>NUCLEOTIDE SEQUENCE [LARGE SCALE GENOMIC DNA]</scope>
    <source>
        <strain>232</strain>
    </source>
</reference>
<name>MNMA_MESH2</name>
<gene>
    <name evidence="1" type="primary">mnmA</name>
    <name type="ordered locus">mhp433</name>
</gene>
<comment type="function">
    <text evidence="1">Catalyzes the 2-thiolation of uridine at the wobble position (U34) of tRNA, leading to the formation of s(2)U34.</text>
</comment>
<comment type="catalytic activity">
    <reaction evidence="1">
        <text>S-sulfanyl-L-cysteinyl-[protein] + uridine(34) in tRNA + AH2 + ATP = 2-thiouridine(34) in tRNA + L-cysteinyl-[protein] + A + AMP + diphosphate + H(+)</text>
        <dbReference type="Rhea" id="RHEA:47032"/>
        <dbReference type="Rhea" id="RHEA-COMP:10131"/>
        <dbReference type="Rhea" id="RHEA-COMP:11726"/>
        <dbReference type="Rhea" id="RHEA-COMP:11727"/>
        <dbReference type="Rhea" id="RHEA-COMP:11728"/>
        <dbReference type="ChEBI" id="CHEBI:13193"/>
        <dbReference type="ChEBI" id="CHEBI:15378"/>
        <dbReference type="ChEBI" id="CHEBI:17499"/>
        <dbReference type="ChEBI" id="CHEBI:29950"/>
        <dbReference type="ChEBI" id="CHEBI:30616"/>
        <dbReference type="ChEBI" id="CHEBI:33019"/>
        <dbReference type="ChEBI" id="CHEBI:61963"/>
        <dbReference type="ChEBI" id="CHEBI:65315"/>
        <dbReference type="ChEBI" id="CHEBI:87170"/>
        <dbReference type="ChEBI" id="CHEBI:456215"/>
        <dbReference type="EC" id="2.8.1.13"/>
    </reaction>
</comment>
<comment type="subcellular location">
    <subcellularLocation>
        <location evidence="1">Cytoplasm</location>
    </subcellularLocation>
</comment>
<comment type="similarity">
    <text evidence="1">Belongs to the MnmA/TRMU family.</text>
</comment>
<comment type="sequence caution" evidence="2">
    <conflict type="erroneous initiation">
        <sequence resource="EMBL-CDS" id="AAV27576"/>
    </conflict>
</comment>
<evidence type="ECO:0000255" key="1">
    <source>
        <dbReference type="HAMAP-Rule" id="MF_00144"/>
    </source>
</evidence>
<evidence type="ECO:0000305" key="2"/>
<sequence length="372" mass="42399">MAKIVVGLSGGVDSAVSAYLLKKAGHNVIAVFMRNWDSSLNNDFLGKKNEKNFTICPQEQDWLDAKVVAKQLNIPIFRIDFIKEYWDEVFSDLILKYQSGLTPNPDILCNKNIKFKHFLDYAQKVHNADFIAMGHYAKTDNGNLYAGADSLKDQSYFLGQLSKSQLQKTIFPLGNLHKSEVRKIANELGLINAKKKDSTGICFIGERKFTDFLQNYIPAQPGNIIDISTKKVLGKHIGIMYFTIGQRKGFGLSGMKEPYFVVGHNLKEKILYVSPQSEKKWLESDSLMAKNANFLSENFRNLDNLSAKFRYRQEAIPIKIEKIQDNSFWISYQKYQAITPGQQVVIYHQNQVILAGEIALLFRNGKKLDYLD</sequence>
<dbReference type="EC" id="2.8.1.13" evidence="1"/>
<dbReference type="EMBL" id="AE017332">
    <property type="protein sequence ID" value="AAV27576.1"/>
    <property type="status" value="ALT_INIT"/>
    <property type="molecule type" value="Genomic_DNA"/>
</dbReference>
<dbReference type="RefSeq" id="WP_011284186.1">
    <property type="nucleotide sequence ID" value="NC_006360.1"/>
</dbReference>
<dbReference type="SMR" id="Q600M2"/>
<dbReference type="GeneID" id="41334728"/>
<dbReference type="KEGG" id="mhy:mhp433"/>
<dbReference type="eggNOG" id="COG0482">
    <property type="taxonomic scope" value="Bacteria"/>
</dbReference>
<dbReference type="HOGENOM" id="CLU_035188_1_0_14"/>
<dbReference type="Proteomes" id="UP000006822">
    <property type="component" value="Chromosome"/>
</dbReference>
<dbReference type="GO" id="GO:0005737">
    <property type="term" value="C:cytoplasm"/>
    <property type="evidence" value="ECO:0007669"/>
    <property type="project" value="UniProtKB-SubCell"/>
</dbReference>
<dbReference type="GO" id="GO:0005524">
    <property type="term" value="F:ATP binding"/>
    <property type="evidence" value="ECO:0007669"/>
    <property type="project" value="UniProtKB-KW"/>
</dbReference>
<dbReference type="GO" id="GO:0000049">
    <property type="term" value="F:tRNA binding"/>
    <property type="evidence" value="ECO:0007669"/>
    <property type="project" value="UniProtKB-KW"/>
</dbReference>
<dbReference type="GO" id="GO:0103016">
    <property type="term" value="F:tRNA-uridine 2-sulfurtransferase activity"/>
    <property type="evidence" value="ECO:0007669"/>
    <property type="project" value="UniProtKB-EC"/>
</dbReference>
<dbReference type="GO" id="GO:0002143">
    <property type="term" value="P:tRNA wobble position uridine thiolation"/>
    <property type="evidence" value="ECO:0007669"/>
    <property type="project" value="TreeGrafter"/>
</dbReference>
<dbReference type="CDD" id="cd01998">
    <property type="entry name" value="MnmA_TRMU-like"/>
    <property type="match status" value="1"/>
</dbReference>
<dbReference type="FunFam" id="2.30.30.280:FF:000001">
    <property type="entry name" value="tRNA-specific 2-thiouridylase MnmA"/>
    <property type="match status" value="1"/>
</dbReference>
<dbReference type="FunFam" id="3.40.50.620:FF:000115">
    <property type="entry name" value="tRNA-specific 2-thiouridylase MnmA"/>
    <property type="match status" value="1"/>
</dbReference>
<dbReference type="Gene3D" id="2.30.30.280">
    <property type="entry name" value="Adenine nucleotide alpha hydrolases-like domains"/>
    <property type="match status" value="1"/>
</dbReference>
<dbReference type="Gene3D" id="3.40.50.620">
    <property type="entry name" value="HUPs"/>
    <property type="match status" value="1"/>
</dbReference>
<dbReference type="Gene3D" id="2.40.30.10">
    <property type="entry name" value="Translation factors"/>
    <property type="match status" value="1"/>
</dbReference>
<dbReference type="HAMAP" id="MF_00144">
    <property type="entry name" value="tRNA_thiouridyl_MnmA"/>
    <property type="match status" value="1"/>
</dbReference>
<dbReference type="InterPro" id="IPR004506">
    <property type="entry name" value="MnmA-like"/>
</dbReference>
<dbReference type="InterPro" id="IPR046885">
    <property type="entry name" value="MnmA-like_C"/>
</dbReference>
<dbReference type="InterPro" id="IPR046884">
    <property type="entry name" value="MnmA-like_central"/>
</dbReference>
<dbReference type="InterPro" id="IPR023382">
    <property type="entry name" value="MnmA-like_central_sf"/>
</dbReference>
<dbReference type="InterPro" id="IPR014729">
    <property type="entry name" value="Rossmann-like_a/b/a_fold"/>
</dbReference>
<dbReference type="NCBIfam" id="NF001138">
    <property type="entry name" value="PRK00143.1"/>
    <property type="match status" value="1"/>
</dbReference>
<dbReference type="NCBIfam" id="TIGR00420">
    <property type="entry name" value="trmU"/>
    <property type="match status" value="1"/>
</dbReference>
<dbReference type="PANTHER" id="PTHR11933:SF5">
    <property type="entry name" value="MITOCHONDRIAL TRNA-SPECIFIC 2-THIOURIDYLASE 1"/>
    <property type="match status" value="1"/>
</dbReference>
<dbReference type="PANTHER" id="PTHR11933">
    <property type="entry name" value="TRNA 5-METHYLAMINOMETHYL-2-THIOURIDYLATE -METHYLTRANSFERASE"/>
    <property type="match status" value="1"/>
</dbReference>
<dbReference type="Pfam" id="PF03054">
    <property type="entry name" value="tRNA_Me_trans"/>
    <property type="match status" value="1"/>
</dbReference>
<dbReference type="Pfam" id="PF20258">
    <property type="entry name" value="tRNA_Me_trans_C"/>
    <property type="match status" value="1"/>
</dbReference>
<dbReference type="Pfam" id="PF20259">
    <property type="entry name" value="tRNA_Me_trans_M"/>
    <property type="match status" value="1"/>
</dbReference>
<dbReference type="SUPFAM" id="SSF52402">
    <property type="entry name" value="Adenine nucleotide alpha hydrolases-like"/>
    <property type="match status" value="1"/>
</dbReference>